<dbReference type="EMBL" id="M12146">
    <property type="protein sequence ID" value="AAA33529.1"/>
    <property type="molecule type" value="mRNA"/>
</dbReference>
<dbReference type="PIR" id="I24557">
    <property type="entry name" value="ZIZM91"/>
</dbReference>
<dbReference type="MaizeGDB" id="58096"/>
<dbReference type="InParanoid" id="P06676"/>
<dbReference type="Proteomes" id="UP000007305">
    <property type="component" value="Unplaced"/>
</dbReference>
<dbReference type="ExpressionAtlas" id="P06676">
    <property type="expression patterns" value="baseline and differential"/>
</dbReference>
<dbReference type="GO" id="GO:0045735">
    <property type="term" value="F:nutrient reservoir activity"/>
    <property type="evidence" value="ECO:0007669"/>
    <property type="project" value="UniProtKB-KW"/>
</dbReference>
<dbReference type="InterPro" id="IPR052508">
    <property type="entry name" value="Maize_Zein_Storage"/>
</dbReference>
<dbReference type="InterPro" id="IPR002530">
    <property type="entry name" value="Zein"/>
</dbReference>
<dbReference type="PANTHER" id="PTHR48244:SF2">
    <property type="entry name" value="ZEIN-ALPHA 19C2"/>
    <property type="match status" value="1"/>
</dbReference>
<dbReference type="PANTHER" id="PTHR48244">
    <property type="entry name" value="ZEIN-ALPHA A20-RELATED"/>
    <property type="match status" value="1"/>
</dbReference>
<dbReference type="Pfam" id="PF01559">
    <property type="entry name" value="Zein"/>
    <property type="match status" value="1"/>
</dbReference>
<reference key="1">
    <citation type="journal article" date="1985" name="J. Biol. Chem.">
        <title>Nucleotide sequence analysis of zein mRNAs from maize endosperm.</title>
        <authorList>
            <person name="Marks M.D."/>
            <person name="Lindell J.S."/>
            <person name="Larkins B.A."/>
        </authorList>
    </citation>
    <scope>NUCLEOTIDE SEQUENCE [MRNA]</scope>
</reference>
<feature type="signal peptide">
    <location>
        <begin position="1"/>
        <end position="21"/>
    </location>
</feature>
<feature type="chain" id="PRO_0000041618" description="Zein-alpha 19C1">
    <location>
        <begin position="22"/>
        <end position="240"/>
    </location>
</feature>
<protein>
    <recommendedName>
        <fullName>Zein-alpha 19C1</fullName>
    </recommendedName>
    <alternativeName>
        <fullName>19 kDa zein 19C1</fullName>
    </alternativeName>
</protein>
<evidence type="ECO:0000250" key="1">
    <source>
        <dbReference type="UniProtKB" id="P04698"/>
    </source>
</evidence>
<evidence type="ECO:0000305" key="2"/>
<keyword id="KW-1185">Reference proteome</keyword>
<keyword id="KW-0677">Repeat</keyword>
<keyword id="KW-0708">Seed storage protein</keyword>
<keyword id="KW-0732">Signal</keyword>
<keyword id="KW-0758">Storage protein</keyword>
<sequence length="240" mass="26255">MATKIFSLLMLLALSACVANATIFPQCSQAPIASLLPPYLPSMIASVCENPALQPYRLQQAIAASNIPLSPLLFQQSPALSLVQSLVQTIRAQQLQQLVLPLINQVALANLSPYSQQQQFLPFNQLSTLNPAAYLQQQLLPFSQLATAYSQQQQLLPFNQLAALNPAAYLQQQILLPFSQLAAANRASFLTQQQLLPFYQQFAANPATLLQLQQLLPFVQLALTDPAASYQQHIIGGALF</sequence>
<organism>
    <name type="scientific">Zea mays</name>
    <name type="common">Maize</name>
    <dbReference type="NCBI Taxonomy" id="4577"/>
    <lineage>
        <taxon>Eukaryota</taxon>
        <taxon>Viridiplantae</taxon>
        <taxon>Streptophyta</taxon>
        <taxon>Embryophyta</taxon>
        <taxon>Tracheophyta</taxon>
        <taxon>Spermatophyta</taxon>
        <taxon>Magnoliopsida</taxon>
        <taxon>Liliopsida</taxon>
        <taxon>Poales</taxon>
        <taxon>Poaceae</taxon>
        <taxon>PACMAD clade</taxon>
        <taxon>Panicoideae</taxon>
        <taxon>Andropogonodae</taxon>
        <taxon>Andropogoneae</taxon>
        <taxon>Tripsacinae</taxon>
        <taxon>Zea</taxon>
    </lineage>
</organism>
<accession>P06676</accession>
<proteinExistence type="evidence at transcript level"/>
<name>ZEA8_MAIZE</name>
<comment type="function">
    <text>Zeins are major seed storage proteins.</text>
</comment>
<comment type="miscellaneous">
    <text>The alpha zeins of 19 kDa and 22 kDa account for 70% of the total zein fraction. They are encoded by a large multigene family.</text>
</comment>
<comment type="miscellaneous">
    <text evidence="1">Structurally, 22K and 19K zeins are composed of nine adjacent, topologically antiparallel helices clustered within a distorted cylinder.</text>
</comment>
<comment type="similarity">
    <text evidence="2">Belongs to the zein family.</text>
</comment>